<keyword id="KW-0963">Cytoplasm</keyword>
<keyword id="KW-0444">Lipid biosynthesis</keyword>
<keyword id="KW-0443">Lipid metabolism</keyword>
<keyword id="KW-0520">NAD</keyword>
<keyword id="KW-0521">NADP</keyword>
<keyword id="KW-0547">Nucleotide-binding</keyword>
<keyword id="KW-0560">Oxidoreductase</keyword>
<keyword id="KW-0594">Phospholipid biosynthesis</keyword>
<keyword id="KW-1208">Phospholipid metabolism</keyword>
<dbReference type="EC" id="1.1.1.94" evidence="1"/>
<dbReference type="EMBL" id="CP001050">
    <property type="protein sequence ID" value="ACF30819.1"/>
    <property type="molecule type" value="Genomic_DNA"/>
</dbReference>
<dbReference type="RefSeq" id="WP_003686938.1">
    <property type="nucleotide sequence ID" value="NC_011035.1"/>
</dbReference>
<dbReference type="SMR" id="B4RQK9"/>
<dbReference type="KEGG" id="ngk:NGK_2215"/>
<dbReference type="HOGENOM" id="CLU_033449_0_2_4"/>
<dbReference type="UniPathway" id="UPA00940"/>
<dbReference type="Proteomes" id="UP000002564">
    <property type="component" value="Chromosome"/>
</dbReference>
<dbReference type="GO" id="GO:0005829">
    <property type="term" value="C:cytosol"/>
    <property type="evidence" value="ECO:0007669"/>
    <property type="project" value="TreeGrafter"/>
</dbReference>
<dbReference type="GO" id="GO:0047952">
    <property type="term" value="F:glycerol-3-phosphate dehydrogenase [NAD(P)+] activity"/>
    <property type="evidence" value="ECO:0007669"/>
    <property type="project" value="UniProtKB-UniRule"/>
</dbReference>
<dbReference type="GO" id="GO:0051287">
    <property type="term" value="F:NAD binding"/>
    <property type="evidence" value="ECO:0007669"/>
    <property type="project" value="InterPro"/>
</dbReference>
<dbReference type="GO" id="GO:0005975">
    <property type="term" value="P:carbohydrate metabolic process"/>
    <property type="evidence" value="ECO:0007669"/>
    <property type="project" value="InterPro"/>
</dbReference>
<dbReference type="GO" id="GO:0046167">
    <property type="term" value="P:glycerol-3-phosphate biosynthetic process"/>
    <property type="evidence" value="ECO:0007669"/>
    <property type="project" value="UniProtKB-UniRule"/>
</dbReference>
<dbReference type="GO" id="GO:0046168">
    <property type="term" value="P:glycerol-3-phosphate catabolic process"/>
    <property type="evidence" value="ECO:0007669"/>
    <property type="project" value="InterPro"/>
</dbReference>
<dbReference type="GO" id="GO:0006650">
    <property type="term" value="P:glycerophospholipid metabolic process"/>
    <property type="evidence" value="ECO:0007669"/>
    <property type="project" value="UniProtKB-UniRule"/>
</dbReference>
<dbReference type="GO" id="GO:0008654">
    <property type="term" value="P:phospholipid biosynthetic process"/>
    <property type="evidence" value="ECO:0007669"/>
    <property type="project" value="UniProtKB-KW"/>
</dbReference>
<dbReference type="FunFam" id="1.10.1040.10:FF:000001">
    <property type="entry name" value="Glycerol-3-phosphate dehydrogenase [NAD(P)+]"/>
    <property type="match status" value="1"/>
</dbReference>
<dbReference type="FunFam" id="3.40.50.720:FF:000019">
    <property type="entry name" value="Glycerol-3-phosphate dehydrogenase [NAD(P)+]"/>
    <property type="match status" value="1"/>
</dbReference>
<dbReference type="Gene3D" id="1.10.1040.10">
    <property type="entry name" value="N-(1-d-carboxylethyl)-l-norvaline Dehydrogenase, domain 2"/>
    <property type="match status" value="1"/>
</dbReference>
<dbReference type="Gene3D" id="3.40.50.720">
    <property type="entry name" value="NAD(P)-binding Rossmann-like Domain"/>
    <property type="match status" value="1"/>
</dbReference>
<dbReference type="HAMAP" id="MF_00394">
    <property type="entry name" value="NAD_Glyc3P_dehydrog"/>
    <property type="match status" value="1"/>
</dbReference>
<dbReference type="InterPro" id="IPR008927">
    <property type="entry name" value="6-PGluconate_DH-like_C_sf"/>
</dbReference>
<dbReference type="InterPro" id="IPR013328">
    <property type="entry name" value="6PGD_dom2"/>
</dbReference>
<dbReference type="InterPro" id="IPR006168">
    <property type="entry name" value="G3P_DH_NAD-dep"/>
</dbReference>
<dbReference type="InterPro" id="IPR006109">
    <property type="entry name" value="G3P_DH_NAD-dep_C"/>
</dbReference>
<dbReference type="InterPro" id="IPR011128">
    <property type="entry name" value="G3P_DH_NAD-dep_N"/>
</dbReference>
<dbReference type="InterPro" id="IPR036291">
    <property type="entry name" value="NAD(P)-bd_dom_sf"/>
</dbReference>
<dbReference type="NCBIfam" id="NF000940">
    <property type="entry name" value="PRK00094.1-2"/>
    <property type="match status" value="1"/>
</dbReference>
<dbReference type="NCBIfam" id="NF000942">
    <property type="entry name" value="PRK00094.1-4"/>
    <property type="match status" value="1"/>
</dbReference>
<dbReference type="PANTHER" id="PTHR11728">
    <property type="entry name" value="GLYCEROL-3-PHOSPHATE DEHYDROGENASE"/>
    <property type="match status" value="1"/>
</dbReference>
<dbReference type="PANTHER" id="PTHR11728:SF1">
    <property type="entry name" value="GLYCEROL-3-PHOSPHATE DEHYDROGENASE [NAD(+)] 2, CHLOROPLASTIC"/>
    <property type="match status" value="1"/>
</dbReference>
<dbReference type="Pfam" id="PF07479">
    <property type="entry name" value="NAD_Gly3P_dh_C"/>
    <property type="match status" value="1"/>
</dbReference>
<dbReference type="Pfam" id="PF01210">
    <property type="entry name" value="NAD_Gly3P_dh_N"/>
    <property type="match status" value="1"/>
</dbReference>
<dbReference type="PIRSF" id="PIRSF000114">
    <property type="entry name" value="Glycerol-3-P_dh"/>
    <property type="match status" value="1"/>
</dbReference>
<dbReference type="PRINTS" id="PR00077">
    <property type="entry name" value="GPDHDRGNASE"/>
</dbReference>
<dbReference type="SUPFAM" id="SSF48179">
    <property type="entry name" value="6-phosphogluconate dehydrogenase C-terminal domain-like"/>
    <property type="match status" value="1"/>
</dbReference>
<dbReference type="SUPFAM" id="SSF51735">
    <property type="entry name" value="NAD(P)-binding Rossmann-fold domains"/>
    <property type="match status" value="1"/>
</dbReference>
<dbReference type="PROSITE" id="PS00957">
    <property type="entry name" value="NAD_G3PDH"/>
    <property type="match status" value="1"/>
</dbReference>
<organism>
    <name type="scientific">Neisseria gonorrhoeae (strain NCCP11945)</name>
    <dbReference type="NCBI Taxonomy" id="521006"/>
    <lineage>
        <taxon>Bacteria</taxon>
        <taxon>Pseudomonadati</taxon>
        <taxon>Pseudomonadota</taxon>
        <taxon>Betaproteobacteria</taxon>
        <taxon>Neisseriales</taxon>
        <taxon>Neisseriaceae</taxon>
        <taxon>Neisseria</taxon>
    </lineage>
</organism>
<name>GPDA_NEIG2</name>
<proteinExistence type="inferred from homology"/>
<accession>B4RQK9</accession>
<evidence type="ECO:0000255" key="1">
    <source>
        <dbReference type="HAMAP-Rule" id="MF_00394"/>
    </source>
</evidence>
<feature type="chain" id="PRO_1000123166" description="Glycerol-3-phosphate dehydrogenase [NAD(P)+]">
    <location>
        <begin position="1"/>
        <end position="329"/>
    </location>
</feature>
<feature type="active site" description="Proton acceptor" evidence="1">
    <location>
        <position position="189"/>
    </location>
</feature>
<feature type="binding site" evidence="1">
    <location>
        <position position="10"/>
    </location>
    <ligand>
        <name>NADPH</name>
        <dbReference type="ChEBI" id="CHEBI:57783"/>
    </ligand>
</feature>
<feature type="binding site" evidence="1">
    <location>
        <position position="11"/>
    </location>
    <ligand>
        <name>NADPH</name>
        <dbReference type="ChEBI" id="CHEBI:57783"/>
    </ligand>
</feature>
<feature type="binding site" evidence="1">
    <location>
        <position position="31"/>
    </location>
    <ligand>
        <name>NADPH</name>
        <dbReference type="ChEBI" id="CHEBI:57783"/>
    </ligand>
</feature>
<feature type="binding site" evidence="1">
    <location>
        <position position="105"/>
    </location>
    <ligand>
        <name>NADPH</name>
        <dbReference type="ChEBI" id="CHEBI:57783"/>
    </ligand>
</feature>
<feature type="binding site" evidence="1">
    <location>
        <position position="105"/>
    </location>
    <ligand>
        <name>sn-glycerol 3-phosphate</name>
        <dbReference type="ChEBI" id="CHEBI:57597"/>
    </ligand>
</feature>
<feature type="binding site" evidence="1">
    <location>
        <position position="134"/>
    </location>
    <ligand>
        <name>sn-glycerol 3-phosphate</name>
        <dbReference type="ChEBI" id="CHEBI:57597"/>
    </ligand>
</feature>
<feature type="binding site" evidence="1">
    <location>
        <position position="136"/>
    </location>
    <ligand>
        <name>sn-glycerol 3-phosphate</name>
        <dbReference type="ChEBI" id="CHEBI:57597"/>
    </ligand>
</feature>
<feature type="binding site" evidence="1">
    <location>
        <position position="138"/>
    </location>
    <ligand>
        <name>NADPH</name>
        <dbReference type="ChEBI" id="CHEBI:57783"/>
    </ligand>
</feature>
<feature type="binding site" evidence="1">
    <location>
        <position position="189"/>
    </location>
    <ligand>
        <name>sn-glycerol 3-phosphate</name>
        <dbReference type="ChEBI" id="CHEBI:57597"/>
    </ligand>
</feature>
<feature type="binding site" evidence="1">
    <location>
        <position position="242"/>
    </location>
    <ligand>
        <name>sn-glycerol 3-phosphate</name>
        <dbReference type="ChEBI" id="CHEBI:57597"/>
    </ligand>
</feature>
<feature type="binding site" evidence="1">
    <location>
        <position position="252"/>
    </location>
    <ligand>
        <name>sn-glycerol 3-phosphate</name>
        <dbReference type="ChEBI" id="CHEBI:57597"/>
    </ligand>
</feature>
<feature type="binding site" evidence="1">
    <location>
        <position position="253"/>
    </location>
    <ligand>
        <name>NADPH</name>
        <dbReference type="ChEBI" id="CHEBI:57783"/>
    </ligand>
</feature>
<feature type="binding site" evidence="1">
    <location>
        <position position="253"/>
    </location>
    <ligand>
        <name>sn-glycerol 3-phosphate</name>
        <dbReference type="ChEBI" id="CHEBI:57597"/>
    </ligand>
</feature>
<feature type="binding site" evidence="1">
    <location>
        <position position="254"/>
    </location>
    <ligand>
        <name>sn-glycerol 3-phosphate</name>
        <dbReference type="ChEBI" id="CHEBI:57597"/>
    </ligand>
</feature>
<feature type="binding site" evidence="1">
    <location>
        <position position="277"/>
    </location>
    <ligand>
        <name>NADPH</name>
        <dbReference type="ChEBI" id="CHEBI:57783"/>
    </ligand>
</feature>
<feature type="binding site" evidence="1">
    <location>
        <position position="279"/>
    </location>
    <ligand>
        <name>NADPH</name>
        <dbReference type="ChEBI" id="CHEBI:57783"/>
    </ligand>
</feature>
<reference key="1">
    <citation type="journal article" date="2008" name="J. Bacteriol.">
        <title>Complete genome sequence of Neisseria gonorrhoeae NCCP11945.</title>
        <authorList>
            <person name="Chung G.T."/>
            <person name="Yoo J.S."/>
            <person name="Oh H.B."/>
            <person name="Lee Y.S."/>
            <person name="Cha S.H."/>
            <person name="Kim S.J."/>
            <person name="Yoo C.K."/>
        </authorList>
    </citation>
    <scope>NUCLEOTIDE SEQUENCE [LARGE SCALE GENOMIC DNA]</scope>
    <source>
        <strain>NCCP11945</strain>
    </source>
</reference>
<sequence length="329" mass="35368">MKITVIGAGSWGTALALHFSQHGNRVSLWTRNADQVRQMQEARENKRGLPGFSFPETLEVCADLAEALKDSGLVLIVTSVAGLRSSAELLKQYGAGHLPVLAACKGFEQDTGLLTFQVLKEVLPDNKKIGVLSGPSFAQELAKQLPCAVVLASENQEWIEELVPQLNTTVMRLYGSTDVIGVAVGGSVKNVMAIATGLSDGLEYGLNARAALVTRGLAEITRLASAMGAQPKTMMGLAGIGDLILTCTGALSRNRRVGLGLAEGKELHQVLVEIGHVSEGVSTIEEVFNTACKYQIDMPITQTLLQLIRKEMTPQQVVERLMERSARFE</sequence>
<comment type="function">
    <text evidence="1">Catalyzes the reduction of the glycolytic intermediate dihydroxyacetone phosphate (DHAP) to sn-glycerol 3-phosphate (G3P), the key precursor for phospholipid synthesis.</text>
</comment>
<comment type="catalytic activity">
    <reaction evidence="1">
        <text>sn-glycerol 3-phosphate + NAD(+) = dihydroxyacetone phosphate + NADH + H(+)</text>
        <dbReference type="Rhea" id="RHEA:11092"/>
        <dbReference type="ChEBI" id="CHEBI:15378"/>
        <dbReference type="ChEBI" id="CHEBI:57540"/>
        <dbReference type="ChEBI" id="CHEBI:57597"/>
        <dbReference type="ChEBI" id="CHEBI:57642"/>
        <dbReference type="ChEBI" id="CHEBI:57945"/>
        <dbReference type="EC" id="1.1.1.94"/>
    </reaction>
    <physiologicalReaction direction="right-to-left" evidence="1">
        <dbReference type="Rhea" id="RHEA:11094"/>
    </physiologicalReaction>
</comment>
<comment type="catalytic activity">
    <reaction evidence="1">
        <text>sn-glycerol 3-phosphate + NADP(+) = dihydroxyacetone phosphate + NADPH + H(+)</text>
        <dbReference type="Rhea" id="RHEA:11096"/>
        <dbReference type="ChEBI" id="CHEBI:15378"/>
        <dbReference type="ChEBI" id="CHEBI:57597"/>
        <dbReference type="ChEBI" id="CHEBI:57642"/>
        <dbReference type="ChEBI" id="CHEBI:57783"/>
        <dbReference type="ChEBI" id="CHEBI:58349"/>
        <dbReference type="EC" id="1.1.1.94"/>
    </reaction>
    <physiologicalReaction direction="right-to-left" evidence="1">
        <dbReference type="Rhea" id="RHEA:11098"/>
    </physiologicalReaction>
</comment>
<comment type="pathway">
    <text evidence="1">Membrane lipid metabolism; glycerophospholipid metabolism.</text>
</comment>
<comment type="subcellular location">
    <subcellularLocation>
        <location evidence="1">Cytoplasm</location>
    </subcellularLocation>
</comment>
<comment type="similarity">
    <text evidence="1">Belongs to the NAD-dependent glycerol-3-phosphate dehydrogenase family.</text>
</comment>
<gene>
    <name evidence="1" type="primary">gpsA</name>
    <name type="ordered locus">NGK_2215</name>
</gene>
<protein>
    <recommendedName>
        <fullName evidence="1">Glycerol-3-phosphate dehydrogenase [NAD(P)+]</fullName>
        <ecNumber evidence="1">1.1.1.94</ecNumber>
    </recommendedName>
    <alternativeName>
        <fullName evidence="1">NAD(P)(+)-dependent glycerol-3-phosphate dehydrogenase</fullName>
    </alternativeName>
    <alternativeName>
        <fullName evidence="1">NAD(P)H-dependent dihydroxyacetone-phosphate reductase</fullName>
    </alternativeName>
</protein>